<keyword id="KW-1185">Reference proteome</keyword>
<gene>
    <name type="ORF">SPAC222.17</name>
</gene>
<reference key="1">
    <citation type="journal article" date="2002" name="Nature">
        <title>The genome sequence of Schizosaccharomyces pombe.</title>
        <authorList>
            <person name="Wood V."/>
            <person name="Gwilliam R."/>
            <person name="Rajandream M.A."/>
            <person name="Lyne M.H."/>
            <person name="Lyne R."/>
            <person name="Stewart A."/>
            <person name="Sgouros J.G."/>
            <person name="Peat N."/>
            <person name="Hayles J."/>
            <person name="Baker S.G."/>
            <person name="Basham D."/>
            <person name="Bowman S."/>
            <person name="Brooks K."/>
            <person name="Brown D."/>
            <person name="Brown S."/>
            <person name="Chillingworth T."/>
            <person name="Churcher C.M."/>
            <person name="Collins M."/>
            <person name="Connor R."/>
            <person name="Cronin A."/>
            <person name="Davis P."/>
            <person name="Feltwell T."/>
            <person name="Fraser A."/>
            <person name="Gentles S."/>
            <person name="Goble A."/>
            <person name="Hamlin N."/>
            <person name="Harris D.E."/>
            <person name="Hidalgo J."/>
            <person name="Hodgson G."/>
            <person name="Holroyd S."/>
            <person name="Hornsby T."/>
            <person name="Howarth S."/>
            <person name="Huckle E.J."/>
            <person name="Hunt S."/>
            <person name="Jagels K."/>
            <person name="James K.D."/>
            <person name="Jones L."/>
            <person name="Jones M."/>
            <person name="Leather S."/>
            <person name="McDonald S."/>
            <person name="McLean J."/>
            <person name="Mooney P."/>
            <person name="Moule S."/>
            <person name="Mungall K.L."/>
            <person name="Murphy L.D."/>
            <person name="Niblett D."/>
            <person name="Odell C."/>
            <person name="Oliver K."/>
            <person name="O'Neil S."/>
            <person name="Pearson D."/>
            <person name="Quail M.A."/>
            <person name="Rabbinowitsch E."/>
            <person name="Rutherford K.M."/>
            <person name="Rutter S."/>
            <person name="Saunders D."/>
            <person name="Seeger K."/>
            <person name="Sharp S."/>
            <person name="Skelton J."/>
            <person name="Simmonds M.N."/>
            <person name="Squares R."/>
            <person name="Squares S."/>
            <person name="Stevens K."/>
            <person name="Taylor K."/>
            <person name="Taylor R.G."/>
            <person name="Tivey A."/>
            <person name="Walsh S.V."/>
            <person name="Warren T."/>
            <person name="Whitehead S."/>
            <person name="Woodward J.R."/>
            <person name="Volckaert G."/>
            <person name="Aert R."/>
            <person name="Robben J."/>
            <person name="Grymonprez B."/>
            <person name="Weltjens I."/>
            <person name="Vanstreels E."/>
            <person name="Rieger M."/>
            <person name="Schaefer M."/>
            <person name="Mueller-Auer S."/>
            <person name="Gabel C."/>
            <person name="Fuchs M."/>
            <person name="Duesterhoeft A."/>
            <person name="Fritzc C."/>
            <person name="Holzer E."/>
            <person name="Moestl D."/>
            <person name="Hilbert H."/>
            <person name="Borzym K."/>
            <person name="Langer I."/>
            <person name="Beck A."/>
            <person name="Lehrach H."/>
            <person name="Reinhardt R."/>
            <person name="Pohl T.M."/>
            <person name="Eger P."/>
            <person name="Zimmermann W."/>
            <person name="Wedler H."/>
            <person name="Wambutt R."/>
            <person name="Purnelle B."/>
            <person name="Goffeau A."/>
            <person name="Cadieu E."/>
            <person name="Dreano S."/>
            <person name="Gloux S."/>
            <person name="Lelaure V."/>
            <person name="Mottier S."/>
            <person name="Galibert F."/>
            <person name="Aves S.J."/>
            <person name="Xiang Z."/>
            <person name="Hunt C."/>
            <person name="Moore K."/>
            <person name="Hurst S.M."/>
            <person name="Lucas M."/>
            <person name="Rochet M."/>
            <person name="Gaillardin C."/>
            <person name="Tallada V.A."/>
            <person name="Garzon A."/>
            <person name="Thode G."/>
            <person name="Daga R.R."/>
            <person name="Cruzado L."/>
            <person name="Jimenez J."/>
            <person name="Sanchez M."/>
            <person name="del Rey F."/>
            <person name="Benito J."/>
            <person name="Dominguez A."/>
            <person name="Revuelta J.L."/>
            <person name="Moreno S."/>
            <person name="Armstrong J."/>
            <person name="Forsburg S.L."/>
            <person name="Cerutti L."/>
            <person name="Lowe T."/>
            <person name="McCombie W.R."/>
            <person name="Paulsen I."/>
            <person name="Potashkin J."/>
            <person name="Shpakovski G.V."/>
            <person name="Ussery D."/>
            <person name="Barrell B.G."/>
            <person name="Nurse P."/>
        </authorList>
    </citation>
    <scope>NUCLEOTIDE SEQUENCE [LARGE SCALE GENOMIC DNA]</scope>
    <source>
        <strain>972 / ATCC 24843</strain>
    </source>
</reference>
<reference key="2">
    <citation type="journal article" date="2008" name="Nature">
        <title>Dynamic repertoire of a eukaryotic transcriptome surveyed at single-nucleotide resolution.</title>
        <authorList>
            <person name="Wilhelm B.T."/>
            <person name="Marguerat S."/>
            <person name="Watt S."/>
            <person name="Schubert F."/>
            <person name="Wood V."/>
            <person name="Goodhead I."/>
            <person name="Penkett C.J."/>
            <person name="Rogers J."/>
            <person name="Baehler J."/>
        </authorList>
    </citation>
    <scope>IDENTIFICATION</scope>
</reference>
<feature type="chain" id="PRO_0000389148" description="Uncharacterized protein C222.17">
    <location>
        <begin position="1"/>
        <end position="89"/>
    </location>
</feature>
<dbReference type="EMBL" id="CU329670">
    <property type="protein sequence ID" value="CBA11492.1"/>
    <property type="molecule type" value="Genomic_DNA"/>
</dbReference>
<dbReference type="RefSeq" id="XP_002742501.1">
    <property type="nucleotide sequence ID" value="XM_002742455.2"/>
</dbReference>
<dbReference type="PaxDb" id="4896-SPAC222.17.1"/>
<dbReference type="EnsemblFungi" id="SPAC222.17.1">
    <property type="protein sequence ID" value="SPAC222.17.1:pep"/>
    <property type="gene ID" value="SPAC222.17"/>
</dbReference>
<dbReference type="PomBase" id="SPAC222.17"/>
<dbReference type="VEuPathDB" id="FungiDB:SPAC222.17"/>
<dbReference type="HOGENOM" id="CLU_150191_1_0_1"/>
<dbReference type="InParanoid" id="C6Y4B9"/>
<dbReference type="OMA" id="QESAFEC"/>
<dbReference type="PRO" id="PR:C6Y4B9"/>
<dbReference type="Proteomes" id="UP000002485">
    <property type="component" value="Chromosome I"/>
</dbReference>
<name>YFMQ_SCHPO</name>
<protein>
    <recommendedName>
        <fullName>Uncharacterized protein C222.17</fullName>
    </recommendedName>
</protein>
<accession>C6Y4B9</accession>
<proteinExistence type="evidence at transcript level"/>
<organism>
    <name type="scientific">Schizosaccharomyces pombe (strain 972 / ATCC 24843)</name>
    <name type="common">Fission yeast</name>
    <dbReference type="NCBI Taxonomy" id="284812"/>
    <lineage>
        <taxon>Eukaryota</taxon>
        <taxon>Fungi</taxon>
        <taxon>Dikarya</taxon>
        <taxon>Ascomycota</taxon>
        <taxon>Taphrinomycotina</taxon>
        <taxon>Schizosaccharomycetes</taxon>
        <taxon>Schizosaccharomycetales</taxon>
        <taxon>Schizosaccharomycetaceae</taxon>
        <taxon>Schizosaccharomyces</taxon>
    </lineage>
</organism>
<sequence>MEEKVQEFLKDSTKEQKVFFESLNNQTERVCQQTESGDISCIELAAAETKLFATMQSLGFICTLSADPNRPTVFECKRELDTNERKERL</sequence>